<sequence>MRAAPAAPLLQLLLLLGPRPEAAGVAEPPLPTVVLAILARNAEHSLPHYLGALERLDYPRARLALWCATDHNVDNTTAMLREWLAAVGDNYAAVVWRPEGEPRSYPDEEGPKHWTKERHQFLMELKQEALTFARDWGADYILFADTDNILTNNQTLRLLIEPGLPVVAPMLDSQTYYSNFWCGITPQGYYRRTADYFPTKNRQRRGCFRVPMVHSTFLVSLRAEGTGQLAFYPPHPNYTWPFDDIIVFAYACQAAGVAVHVCNEQRYGYLNVPVKSHQGLEDERVNFIHLILEALVDGPPMWASAHVSRPPKRPSKMGFDEVFVISLARRPDRRERMLTSLWEMEISGRVVDAVDGRMLNSSVMRTLGVDLLPGYQDPYSGRTLTKGEVGCFLSHYSIWEEVVTRGLAQVVVFEDDVRFESNFKGRLEQLMEEVEAEKLPWDLIYLGRKQVNPEEEAVVEGLPHLVAAGYSYWTLAYVLSLAGARKLLASQPLRRMLPVDEFLPIMFDQHPNEQYKAHFWPRDLQAFSARPLLAAPTHYAGDSEWLSDTETSSPWDDDSGRLISWTGSYKTLRGPRLDLAGGSGHSLRPHPRDEL</sequence>
<dbReference type="EMBL" id="BC151373">
    <property type="protein sequence ID" value="AAI51374.1"/>
    <property type="molecule type" value="mRNA"/>
</dbReference>
<dbReference type="RefSeq" id="NP_001095505.1">
    <property type="nucleotide sequence ID" value="NM_001102035.1"/>
</dbReference>
<dbReference type="SMR" id="A7MB73"/>
<dbReference type="FunCoup" id="A7MB73">
    <property type="interactions" value="113"/>
</dbReference>
<dbReference type="STRING" id="9913.ENSBTAP00000004595"/>
<dbReference type="CAZy" id="GT25">
    <property type="family name" value="Glycosyltransferase Family 25"/>
</dbReference>
<dbReference type="GlyCosmos" id="A7MB73">
    <property type="glycosylation" value="4 sites, No reported glycans"/>
</dbReference>
<dbReference type="GlyGen" id="A7MB73">
    <property type="glycosylation" value="4 sites"/>
</dbReference>
<dbReference type="PaxDb" id="9913-ENSBTAP00000004595"/>
<dbReference type="Ensembl" id="ENSBTAT00000004595.7">
    <property type="protein sequence ID" value="ENSBTAP00000004595.6"/>
    <property type="gene ID" value="ENSBTAG00000038139.4"/>
</dbReference>
<dbReference type="GeneID" id="516122"/>
<dbReference type="KEGG" id="bta:516122"/>
<dbReference type="CTD" id="51148"/>
<dbReference type="VEuPathDB" id="HostDB:ENSBTAG00000038139"/>
<dbReference type="VGNC" id="VGNC:27222">
    <property type="gene designation" value="CERCAM"/>
</dbReference>
<dbReference type="eggNOG" id="KOG4179">
    <property type="taxonomic scope" value="Eukaryota"/>
</dbReference>
<dbReference type="GeneTree" id="ENSGT01030000234558"/>
<dbReference type="HOGENOM" id="CLU_024037_2_0_1"/>
<dbReference type="InParanoid" id="A7MB73"/>
<dbReference type="OMA" id="VEVHVCN"/>
<dbReference type="OrthoDB" id="47375at2759"/>
<dbReference type="Proteomes" id="UP000009136">
    <property type="component" value="Chromosome 11"/>
</dbReference>
<dbReference type="Bgee" id="ENSBTAG00000038139">
    <property type="expression patterns" value="Expressed in thyroid gland and 99 other cell types or tissues"/>
</dbReference>
<dbReference type="GO" id="GO:0005788">
    <property type="term" value="C:endoplasmic reticulum lumen"/>
    <property type="evidence" value="ECO:0007669"/>
    <property type="project" value="UniProtKB-SubCell"/>
</dbReference>
<dbReference type="GO" id="GO:0042802">
    <property type="term" value="F:identical protein binding"/>
    <property type="evidence" value="ECO:0007669"/>
    <property type="project" value="Ensembl"/>
</dbReference>
<dbReference type="GO" id="GO:0007155">
    <property type="term" value="P:cell adhesion"/>
    <property type="evidence" value="ECO:0007669"/>
    <property type="project" value="UniProtKB-KW"/>
</dbReference>
<dbReference type="CDD" id="cd00761">
    <property type="entry name" value="Glyco_tranf_GTA_type"/>
    <property type="match status" value="1"/>
</dbReference>
<dbReference type="CDD" id="cd06532">
    <property type="entry name" value="Glyco_transf_25"/>
    <property type="match status" value="1"/>
</dbReference>
<dbReference type="FunFam" id="3.90.550.10:FF:000048">
    <property type="entry name" value="Glycosyltransferase 25 family member 1"/>
    <property type="match status" value="1"/>
</dbReference>
<dbReference type="Gene3D" id="3.90.550.10">
    <property type="entry name" value="Spore Coat Polysaccharide Biosynthesis Protein SpsA, Chain A"/>
    <property type="match status" value="1"/>
</dbReference>
<dbReference type="InterPro" id="IPR050757">
    <property type="entry name" value="Collagen_mod_GT25"/>
</dbReference>
<dbReference type="InterPro" id="IPR002654">
    <property type="entry name" value="Glyco_trans_25"/>
</dbReference>
<dbReference type="InterPro" id="IPR029044">
    <property type="entry name" value="Nucleotide-diphossugar_trans"/>
</dbReference>
<dbReference type="PANTHER" id="PTHR10730:SF9">
    <property type="entry name" value="INACTIVE GLYCOSYLTRANSFERASE 25 FAMILY MEMBER 3"/>
    <property type="match status" value="1"/>
</dbReference>
<dbReference type="PANTHER" id="PTHR10730">
    <property type="entry name" value="PROCOLLAGEN-LYSINE,2-OXOGLUTARATE 5-DIOXYGENASE/GLYCOSYLTRANSFERASE 25 FAMILY MEMBER"/>
    <property type="match status" value="1"/>
</dbReference>
<dbReference type="Pfam" id="PF01755">
    <property type="entry name" value="Glyco_transf_25"/>
    <property type="match status" value="1"/>
</dbReference>
<dbReference type="SUPFAM" id="SSF53448">
    <property type="entry name" value="Nucleotide-diphospho-sugar transferases"/>
    <property type="match status" value="1"/>
</dbReference>
<dbReference type="PROSITE" id="PS00014">
    <property type="entry name" value="ER_TARGET"/>
    <property type="match status" value="1"/>
</dbReference>
<accession>A7MB73</accession>
<proteinExistence type="evidence at transcript level"/>
<feature type="signal peptide" evidence="2">
    <location>
        <begin position="1"/>
        <end position="24"/>
    </location>
</feature>
<feature type="chain" id="PRO_0000309543" description="Probable inactive glycosyltransferase 25 family member 3">
    <location>
        <begin position="25"/>
        <end position="595"/>
    </location>
</feature>
<feature type="region of interest" description="Disordered" evidence="4">
    <location>
        <begin position="576"/>
        <end position="595"/>
    </location>
</feature>
<feature type="short sequence motif" description="Prevents secretion from ER" evidence="3">
    <location>
        <begin position="592"/>
        <end position="595"/>
    </location>
</feature>
<feature type="glycosylation site" description="N-linked (GlcNAc...) asparagine" evidence="2">
    <location>
        <position position="75"/>
    </location>
</feature>
<feature type="glycosylation site" description="N-linked (GlcNAc...) asparagine" evidence="2">
    <location>
        <position position="153"/>
    </location>
</feature>
<feature type="glycosylation site" description="N-linked (GlcNAc...) asparagine" evidence="2">
    <location>
        <position position="237"/>
    </location>
</feature>
<feature type="glycosylation site" description="N-linked (GlcNAc...) asparagine" evidence="2">
    <location>
        <position position="360"/>
    </location>
</feature>
<reference key="1">
    <citation type="submission" date="2007-07" db="EMBL/GenBank/DDBJ databases">
        <authorList>
            <consortium name="NIH - Mammalian Gene Collection (MGC) project"/>
        </authorList>
    </citation>
    <scope>NUCLEOTIDE SEQUENCE [LARGE SCALE MRNA]</scope>
    <source>
        <strain>Hereford</strain>
        <tissue>Fetal muscle</tissue>
    </source>
</reference>
<evidence type="ECO:0000250" key="1">
    <source>
        <dbReference type="UniProtKB" id="Q5T4B2"/>
    </source>
</evidence>
<evidence type="ECO:0000255" key="2"/>
<evidence type="ECO:0000255" key="3">
    <source>
        <dbReference type="PROSITE-ProRule" id="PRU10138"/>
    </source>
</evidence>
<evidence type="ECO:0000256" key="4">
    <source>
        <dbReference type="SAM" id="MobiDB-lite"/>
    </source>
</evidence>
<evidence type="ECO:0000305" key="5"/>
<organism>
    <name type="scientific">Bos taurus</name>
    <name type="common">Bovine</name>
    <dbReference type="NCBI Taxonomy" id="9913"/>
    <lineage>
        <taxon>Eukaryota</taxon>
        <taxon>Metazoa</taxon>
        <taxon>Chordata</taxon>
        <taxon>Craniata</taxon>
        <taxon>Vertebrata</taxon>
        <taxon>Euteleostomi</taxon>
        <taxon>Mammalia</taxon>
        <taxon>Eutheria</taxon>
        <taxon>Laurasiatheria</taxon>
        <taxon>Artiodactyla</taxon>
        <taxon>Ruminantia</taxon>
        <taxon>Pecora</taxon>
        <taxon>Bovidae</taxon>
        <taxon>Bovinae</taxon>
        <taxon>Bos</taxon>
    </lineage>
</organism>
<name>GT253_BOVIN</name>
<keyword id="KW-0130">Cell adhesion</keyword>
<keyword id="KW-0256">Endoplasmic reticulum</keyword>
<keyword id="KW-0325">Glycoprotein</keyword>
<keyword id="KW-1185">Reference proteome</keyword>
<keyword id="KW-0732">Signal</keyword>
<gene>
    <name type="primary">CERCAM</name>
    <name type="synonym">CEECAM1</name>
    <name type="synonym">GLT25D3</name>
</gene>
<protein>
    <recommendedName>
        <fullName>Probable inactive glycosyltransferase 25 family member 3</fullName>
    </recommendedName>
    <alternativeName>
        <fullName>Cerebral endothelial cell adhesion molecule</fullName>
    </alternativeName>
</protein>
<comment type="function">
    <text evidence="1">Probable cell adhesion protein involved in leukocyte transmigration across the blood-brain barrier. Does not express any beta-galactosyltransferase activity in vitro.</text>
</comment>
<comment type="subcellular location">
    <subcellularLocation>
        <location evidence="3">Endoplasmic reticulum lumen</location>
    </subcellularLocation>
</comment>
<comment type="similarity">
    <text evidence="5">Belongs to the glycosyltransferase 25 family.</text>
</comment>